<organism>
    <name type="scientific">Penicillium aethiopicum</name>
    <dbReference type="NCBI Taxonomy" id="36650"/>
    <lineage>
        <taxon>Eukaryota</taxon>
        <taxon>Fungi</taxon>
        <taxon>Dikarya</taxon>
        <taxon>Ascomycota</taxon>
        <taxon>Pezizomycotina</taxon>
        <taxon>Eurotiomycetes</taxon>
        <taxon>Eurotiomycetidae</taxon>
        <taxon>Eurotiales</taxon>
        <taxon>Aspergillaceae</taxon>
        <taxon>Penicillium</taxon>
    </lineage>
</organism>
<comment type="function">
    <text evidence="4">Transcription factor that regulates expression of the gene cluster that mediates the biosynthesis of Griseofulvin, an important antifungal drug that has been in use for a long time for treating dermatophyte infections (PubMed:20534346).</text>
</comment>
<comment type="subcellular location">
    <subcellularLocation>
        <location evidence="1">Nucleus</location>
    </subcellularLocation>
</comment>
<comment type="biotechnology">
    <text evidence="3 5">Griseofulvin is a spirocyclic fungal natural product used in treatment of fungal dermatophytes (PubMed:13577889, PubMed:4583105).</text>
</comment>
<reference key="1">
    <citation type="journal article" date="2010" name="Chem. Biol.">
        <title>Identification of the viridicatumtoxin and griseofulvin gene clusters from Penicillium aethiopicum.</title>
        <authorList>
            <person name="Chooi Y.H."/>
            <person name="Cacho R."/>
            <person name="Tang Y."/>
        </authorList>
    </citation>
    <scope>NUCLEOTIDE SEQUENCE [GENOMIC DNA]</scope>
    <scope>FUNCTION</scope>
    <source>
        <strain>IBT 5753</strain>
    </source>
</reference>
<reference key="2">
    <citation type="journal article" date="1958" name="Nature">
        <title>Experimental ringworm in guinea pigs: oral treatment with griseofulvin.</title>
        <authorList>
            <person name="Gentles J.C."/>
        </authorList>
    </citation>
    <scope>BIOTECHNOLOGY</scope>
</reference>
<reference key="3">
    <citation type="journal article" date="1973" name="Nature">
        <title>Griseofulvin inhibits fungal mitosis.</title>
        <authorList>
            <person name="Gull K."/>
            <person name="Trinci A.P."/>
        </authorList>
    </citation>
    <scope>BIOTECHNOLOGY</scope>
</reference>
<reference key="4">
    <citation type="journal article" date="2013" name="ACS Chem. Biol.">
        <title>Complexity generation in fungal polyketide biosynthesis: a spirocycle-forming P450 in the concise pathway to the antifungal drug griseofulvin.</title>
        <authorList>
            <person name="Cacho R.A."/>
            <person name="Chooi Y.H."/>
            <person name="Zhou H."/>
            <person name="Tang Y."/>
        </authorList>
    </citation>
    <scope>FUNCTION</scope>
</reference>
<feature type="chain" id="PRO_0000436728" description="Transcription factor gsfR2">
    <location>
        <begin position="1"/>
        <end position="415"/>
    </location>
</feature>
<feature type="DNA-binding region" description="Zn(2)-C6 fungal-type" evidence="1">
    <location>
        <begin position="9"/>
        <end position="36"/>
    </location>
</feature>
<feature type="region of interest" description="Disordered" evidence="2">
    <location>
        <begin position="65"/>
        <end position="91"/>
    </location>
</feature>
<feature type="compositionally biased region" description="Polar residues" evidence="2">
    <location>
        <begin position="72"/>
        <end position="88"/>
    </location>
</feature>
<gene>
    <name evidence="6" type="primary">gsfR2</name>
</gene>
<evidence type="ECO:0000255" key="1">
    <source>
        <dbReference type="PROSITE-ProRule" id="PRU00227"/>
    </source>
</evidence>
<evidence type="ECO:0000256" key="2">
    <source>
        <dbReference type="SAM" id="MobiDB-lite"/>
    </source>
</evidence>
<evidence type="ECO:0000269" key="3">
    <source>
    </source>
</evidence>
<evidence type="ECO:0000269" key="4">
    <source>
    </source>
</evidence>
<evidence type="ECO:0000269" key="5">
    <source>
    </source>
</evidence>
<evidence type="ECO:0000303" key="6">
    <source>
    </source>
</evidence>
<sequence>MPPLYRRSCITCVQSKRKCDQGLPKCQRCLAKNIHCEYNPRYPNRRRQTTERNVDENVSLVEPIAEEPSRGCQLQRSPARPTSPTHSPHANDIFFNFANDPFNLESIPQDNFLNSTIFEDVVTQQAPNDTERITSDTTAQARVEFAAKKLSVIPKIFSQQGQTMFIHRQLFQDRAPPALQDALSACALYCLKSTENQTLVFRNLEHKRKQLISSIDPLLASKLDLLEALQALVLYQIISLFDGDIRLRAQAEADEPVLLMWAAQLTLRTPQFQPPLGLSNPQSLAGSASMDWGRWLIEESSRRTLITASMLKGVYSFVKLGYDTVPDMRMSFTAQAVLWNSQSEISWRRAYKEKERLEIQVTHWDETIAKAKANDLEELGVLIMVMLKGTGATGEWLGHSQNIRYGLEEAYYGSV</sequence>
<proteinExistence type="evidence at protein level"/>
<keyword id="KW-0238">DNA-binding</keyword>
<keyword id="KW-0479">Metal-binding</keyword>
<keyword id="KW-0539">Nucleus</keyword>
<keyword id="KW-0804">Transcription</keyword>
<keyword id="KW-0805">Transcription regulation</keyword>
<keyword id="KW-0862">Zinc</keyword>
<name>GSFR2_PENAE</name>
<dbReference type="EMBL" id="GU574478">
    <property type="protein sequence ID" value="ADI24952.1"/>
    <property type="molecule type" value="Genomic_DNA"/>
</dbReference>
<dbReference type="SMR" id="D7PI10"/>
<dbReference type="GO" id="GO:0005634">
    <property type="term" value="C:nucleus"/>
    <property type="evidence" value="ECO:0007669"/>
    <property type="project" value="UniProtKB-SubCell"/>
</dbReference>
<dbReference type="GO" id="GO:0003677">
    <property type="term" value="F:DNA binding"/>
    <property type="evidence" value="ECO:0007669"/>
    <property type="project" value="UniProtKB-KW"/>
</dbReference>
<dbReference type="GO" id="GO:0000981">
    <property type="term" value="F:DNA-binding transcription factor activity, RNA polymerase II-specific"/>
    <property type="evidence" value="ECO:0007669"/>
    <property type="project" value="InterPro"/>
</dbReference>
<dbReference type="GO" id="GO:0008270">
    <property type="term" value="F:zinc ion binding"/>
    <property type="evidence" value="ECO:0007669"/>
    <property type="project" value="InterPro"/>
</dbReference>
<dbReference type="CDD" id="cd00067">
    <property type="entry name" value="GAL4"/>
    <property type="match status" value="1"/>
</dbReference>
<dbReference type="Gene3D" id="4.10.240.10">
    <property type="entry name" value="Zn(2)-C6 fungal-type DNA-binding domain"/>
    <property type="match status" value="1"/>
</dbReference>
<dbReference type="InterPro" id="IPR036864">
    <property type="entry name" value="Zn2-C6_fun-type_DNA-bd_sf"/>
</dbReference>
<dbReference type="InterPro" id="IPR001138">
    <property type="entry name" value="Zn2Cys6_DnaBD"/>
</dbReference>
<dbReference type="PANTHER" id="PTHR47660:SF2">
    <property type="entry name" value="TRANSCRIPTION FACTOR WITH C2H2 AND ZN(2)-CYS(6) DNA BINDING DOMAIN (EUROFUNG)"/>
    <property type="match status" value="1"/>
</dbReference>
<dbReference type="PANTHER" id="PTHR47660">
    <property type="entry name" value="TRANSCRIPTION FACTOR WITH C2H2 AND ZN(2)-CYS(6) DNA BINDING DOMAIN (EUROFUNG)-RELATED-RELATED"/>
    <property type="match status" value="1"/>
</dbReference>
<dbReference type="Pfam" id="PF00172">
    <property type="entry name" value="Zn_clus"/>
    <property type="match status" value="1"/>
</dbReference>
<dbReference type="SMART" id="SM00066">
    <property type="entry name" value="GAL4"/>
    <property type="match status" value="1"/>
</dbReference>
<dbReference type="SUPFAM" id="SSF57701">
    <property type="entry name" value="Zn2/Cys6 DNA-binding domain"/>
    <property type="match status" value="1"/>
</dbReference>
<dbReference type="PROSITE" id="PS50048">
    <property type="entry name" value="ZN2_CY6_FUNGAL_2"/>
    <property type="match status" value="1"/>
</dbReference>
<accession>D7PI10</accession>
<protein>
    <recommendedName>
        <fullName evidence="6">Transcription factor gsfR2</fullName>
    </recommendedName>
    <alternativeName>
        <fullName evidence="6">Griseofulvin synthesis protein R2A</fullName>
    </alternativeName>
</protein>